<reference key="1">
    <citation type="journal article" date="2009" name="Appl. Environ. Microbiol.">
        <title>Novel features of the polysaccharide-digesting gliding bacterium Flavobacterium johnsoniae as revealed by genome sequence analysis.</title>
        <authorList>
            <person name="McBride M.J."/>
            <person name="Xie G."/>
            <person name="Martens E.C."/>
            <person name="Lapidus A."/>
            <person name="Henrissat B."/>
            <person name="Rhodes R.G."/>
            <person name="Goltsman E."/>
            <person name="Wang W."/>
            <person name="Xu J."/>
            <person name="Hunnicutt D.W."/>
            <person name="Staroscik A.M."/>
            <person name="Hoover T.R."/>
            <person name="Cheng Y.Q."/>
            <person name="Stein J.L."/>
        </authorList>
    </citation>
    <scope>NUCLEOTIDE SEQUENCE [LARGE SCALE GENOMIC DNA]</scope>
    <source>
        <strain>ATCC 17061 / DSM 2064 / JCM 8514 / BCRC 14874 / CCUG 350202 / NBRC 14942 / NCIMB 11054 / UW101</strain>
    </source>
</reference>
<evidence type="ECO:0000255" key="1">
    <source>
        <dbReference type="HAMAP-Rule" id="MF_01326"/>
    </source>
</evidence>
<evidence type="ECO:0000305" key="2"/>
<gene>
    <name evidence="1" type="primary">rplX</name>
    <name type="ordered locus">Fjoh_0386</name>
</gene>
<comment type="function">
    <text evidence="1">One of two assembly initiator proteins, it binds directly to the 5'-end of the 23S rRNA, where it nucleates assembly of the 50S subunit.</text>
</comment>
<comment type="function">
    <text evidence="1">One of the proteins that surrounds the polypeptide exit tunnel on the outside of the subunit.</text>
</comment>
<comment type="subunit">
    <text evidence="1">Part of the 50S ribosomal subunit.</text>
</comment>
<comment type="similarity">
    <text evidence="1">Belongs to the universal ribosomal protein uL24 family.</text>
</comment>
<accession>A5FMY9</accession>
<sequence>MIKLKIKSGDIVRVIAGDHKGAEGKVLRVYREKNKAIVEGVNLVSKHTKPSAKNPQGGIVKKEASIQISNIALIDPKTKETTRVGIRVEGDKKVRFSKKSNQVL</sequence>
<organism>
    <name type="scientific">Flavobacterium johnsoniae (strain ATCC 17061 / DSM 2064 / JCM 8514 / BCRC 14874 / CCUG 350202 / NBRC 14942 / NCIMB 11054 / UW101)</name>
    <name type="common">Cytophaga johnsonae</name>
    <dbReference type="NCBI Taxonomy" id="376686"/>
    <lineage>
        <taxon>Bacteria</taxon>
        <taxon>Pseudomonadati</taxon>
        <taxon>Bacteroidota</taxon>
        <taxon>Flavobacteriia</taxon>
        <taxon>Flavobacteriales</taxon>
        <taxon>Flavobacteriaceae</taxon>
        <taxon>Flavobacterium</taxon>
    </lineage>
</organism>
<feature type="chain" id="PRO_1000086480" description="Large ribosomal subunit protein uL24">
    <location>
        <begin position="1"/>
        <end position="104"/>
    </location>
</feature>
<protein>
    <recommendedName>
        <fullName evidence="1">Large ribosomal subunit protein uL24</fullName>
    </recommendedName>
    <alternativeName>
        <fullName evidence="2">50S ribosomal protein L24</fullName>
    </alternativeName>
</protein>
<name>RL24_FLAJ1</name>
<keyword id="KW-0687">Ribonucleoprotein</keyword>
<keyword id="KW-0689">Ribosomal protein</keyword>
<keyword id="KW-0694">RNA-binding</keyword>
<keyword id="KW-0699">rRNA-binding</keyword>
<proteinExistence type="inferred from homology"/>
<dbReference type="EMBL" id="CP000685">
    <property type="protein sequence ID" value="ABQ03422.1"/>
    <property type="molecule type" value="Genomic_DNA"/>
</dbReference>
<dbReference type="RefSeq" id="WP_008464300.1">
    <property type="nucleotide sequence ID" value="NZ_MUGZ01000005.1"/>
</dbReference>
<dbReference type="SMR" id="A5FMY9"/>
<dbReference type="STRING" id="376686.Fjoh_0386"/>
<dbReference type="KEGG" id="fjo:Fjoh_0386"/>
<dbReference type="eggNOG" id="COG0198">
    <property type="taxonomic scope" value="Bacteria"/>
</dbReference>
<dbReference type="HOGENOM" id="CLU_093315_2_0_10"/>
<dbReference type="OrthoDB" id="9807419at2"/>
<dbReference type="Proteomes" id="UP000006694">
    <property type="component" value="Chromosome"/>
</dbReference>
<dbReference type="GO" id="GO:1990904">
    <property type="term" value="C:ribonucleoprotein complex"/>
    <property type="evidence" value="ECO:0007669"/>
    <property type="project" value="UniProtKB-KW"/>
</dbReference>
<dbReference type="GO" id="GO:0005840">
    <property type="term" value="C:ribosome"/>
    <property type="evidence" value="ECO:0007669"/>
    <property type="project" value="UniProtKB-KW"/>
</dbReference>
<dbReference type="GO" id="GO:0019843">
    <property type="term" value="F:rRNA binding"/>
    <property type="evidence" value="ECO:0007669"/>
    <property type="project" value="UniProtKB-UniRule"/>
</dbReference>
<dbReference type="GO" id="GO:0003735">
    <property type="term" value="F:structural constituent of ribosome"/>
    <property type="evidence" value="ECO:0007669"/>
    <property type="project" value="InterPro"/>
</dbReference>
<dbReference type="GO" id="GO:0006412">
    <property type="term" value="P:translation"/>
    <property type="evidence" value="ECO:0007669"/>
    <property type="project" value="UniProtKB-UniRule"/>
</dbReference>
<dbReference type="CDD" id="cd06089">
    <property type="entry name" value="KOW_RPL26"/>
    <property type="match status" value="1"/>
</dbReference>
<dbReference type="FunFam" id="2.30.30.30:FF:000004">
    <property type="entry name" value="50S ribosomal protein L24"/>
    <property type="match status" value="1"/>
</dbReference>
<dbReference type="Gene3D" id="2.30.30.30">
    <property type="match status" value="1"/>
</dbReference>
<dbReference type="HAMAP" id="MF_01326_B">
    <property type="entry name" value="Ribosomal_uL24_B"/>
    <property type="match status" value="1"/>
</dbReference>
<dbReference type="InterPro" id="IPR005824">
    <property type="entry name" value="KOW"/>
</dbReference>
<dbReference type="InterPro" id="IPR014722">
    <property type="entry name" value="Rib_uL2_dom2"/>
</dbReference>
<dbReference type="InterPro" id="IPR003256">
    <property type="entry name" value="Ribosomal_uL24"/>
</dbReference>
<dbReference type="InterPro" id="IPR005825">
    <property type="entry name" value="Ribosomal_uL24_CS"/>
</dbReference>
<dbReference type="InterPro" id="IPR041988">
    <property type="entry name" value="Ribosomal_uL24_KOW"/>
</dbReference>
<dbReference type="InterPro" id="IPR008991">
    <property type="entry name" value="Translation_prot_SH3-like_sf"/>
</dbReference>
<dbReference type="NCBIfam" id="TIGR01079">
    <property type="entry name" value="rplX_bact"/>
    <property type="match status" value="1"/>
</dbReference>
<dbReference type="PANTHER" id="PTHR12903">
    <property type="entry name" value="MITOCHONDRIAL RIBOSOMAL PROTEIN L24"/>
    <property type="match status" value="1"/>
</dbReference>
<dbReference type="Pfam" id="PF00467">
    <property type="entry name" value="KOW"/>
    <property type="match status" value="1"/>
</dbReference>
<dbReference type="Pfam" id="PF17136">
    <property type="entry name" value="ribosomal_L24"/>
    <property type="match status" value="1"/>
</dbReference>
<dbReference type="SMART" id="SM00739">
    <property type="entry name" value="KOW"/>
    <property type="match status" value="1"/>
</dbReference>
<dbReference type="SUPFAM" id="SSF50104">
    <property type="entry name" value="Translation proteins SH3-like domain"/>
    <property type="match status" value="1"/>
</dbReference>
<dbReference type="PROSITE" id="PS01108">
    <property type="entry name" value="RIBOSOMAL_L24"/>
    <property type="match status" value="1"/>
</dbReference>